<reference key="1">
    <citation type="journal article" date="2007" name="Proc. Natl. Acad. Sci. U.S.A.">
        <title>Genome and proteome of long-chain alkane degrading Geobacillus thermodenitrificans NG80-2 isolated from a deep-subsurface oil reservoir.</title>
        <authorList>
            <person name="Feng L."/>
            <person name="Wang W."/>
            <person name="Cheng J."/>
            <person name="Ren Y."/>
            <person name="Zhao G."/>
            <person name="Gao C."/>
            <person name="Tang Y."/>
            <person name="Liu X."/>
            <person name="Han W."/>
            <person name="Peng X."/>
            <person name="Liu R."/>
            <person name="Wang L."/>
        </authorList>
    </citation>
    <scope>NUCLEOTIDE SEQUENCE [LARGE SCALE GENOMIC DNA]</scope>
    <source>
        <strain>NG80-2</strain>
    </source>
</reference>
<evidence type="ECO:0000255" key="1">
    <source>
        <dbReference type="HAMAP-Rule" id="MF_00089"/>
    </source>
</evidence>
<organism>
    <name type="scientific">Geobacillus thermodenitrificans (strain NG80-2)</name>
    <dbReference type="NCBI Taxonomy" id="420246"/>
    <lineage>
        <taxon>Bacteria</taxon>
        <taxon>Bacillati</taxon>
        <taxon>Bacillota</taxon>
        <taxon>Bacilli</taxon>
        <taxon>Bacillales</taxon>
        <taxon>Anoxybacillaceae</taxon>
        <taxon>Geobacillus</taxon>
    </lineage>
</organism>
<keyword id="KW-0004">4Fe-4S</keyword>
<keyword id="KW-0408">Iron</keyword>
<keyword id="KW-0411">Iron-sulfur</keyword>
<keyword id="KW-0456">Lyase</keyword>
<keyword id="KW-0479">Metal-binding</keyword>
<keyword id="KW-0949">S-adenosyl-L-methionine</keyword>
<keyword id="KW-0784">Thiamine biosynthesis</keyword>
<keyword id="KW-0862">Zinc</keyword>
<name>THIC_GEOTN</name>
<proteinExistence type="inferred from homology"/>
<comment type="function">
    <text evidence="1">Catalyzes the synthesis of the hydroxymethylpyrimidine phosphate (HMP-P) moiety of thiamine from aminoimidazole ribotide (AIR) in a radical S-adenosyl-L-methionine (SAM)-dependent reaction.</text>
</comment>
<comment type="catalytic activity">
    <reaction evidence="1">
        <text>5-amino-1-(5-phospho-beta-D-ribosyl)imidazole + S-adenosyl-L-methionine = 4-amino-2-methyl-5-(phosphooxymethyl)pyrimidine + CO + 5'-deoxyadenosine + formate + L-methionine + 3 H(+)</text>
        <dbReference type="Rhea" id="RHEA:24840"/>
        <dbReference type="ChEBI" id="CHEBI:15378"/>
        <dbReference type="ChEBI" id="CHEBI:15740"/>
        <dbReference type="ChEBI" id="CHEBI:17245"/>
        <dbReference type="ChEBI" id="CHEBI:17319"/>
        <dbReference type="ChEBI" id="CHEBI:57844"/>
        <dbReference type="ChEBI" id="CHEBI:58354"/>
        <dbReference type="ChEBI" id="CHEBI:59789"/>
        <dbReference type="ChEBI" id="CHEBI:137981"/>
        <dbReference type="EC" id="4.1.99.17"/>
    </reaction>
</comment>
<comment type="cofactor">
    <cofactor evidence="1">
        <name>[4Fe-4S] cluster</name>
        <dbReference type="ChEBI" id="CHEBI:49883"/>
    </cofactor>
    <text evidence="1">Binds 1 [4Fe-4S] cluster per subunit. The cluster is coordinated with 3 cysteines and an exchangeable S-adenosyl-L-methionine.</text>
</comment>
<comment type="pathway">
    <text evidence="1">Cofactor biosynthesis; thiamine diphosphate biosynthesis.</text>
</comment>
<comment type="similarity">
    <text evidence="1">Belongs to the ThiC family.</text>
</comment>
<sequence>MENIRSFMSFPASRKVYVEGSRPDVRVPMREIALSPTKTPQGEVENKPVRVYDTTGPYTDPDFEPNVEKGLPLLRRNWIVERGDVEETEPQSTAGRAASLPFARRPLRAKPGKVVTQMHYAKKGIITPEMEFVAIREQIDPEIVRQEVAAGRAIIPSNINHPESEPMIIGRRFHVKINANIGNSAVSSSIENEVEKLLWAVRWGADTVMDLSTGKQIHETREYIIRNSPVPIGTVPIYQALEKVGGVPEKLTWDVYRETLIEQAEQGVDYMTIHAGVRLHYIPLTVNRTTGIVSRGGSIIAQWCLAHHEENFLYTHFEEICEILKQYDVAISLGDGLRPGSIADANDEAQFAELETLGELTKIAWEHDVQVMIEGPGHIPMQKIRENVEREQELCHGAPFYTLGPLVTDIAPGYDHITSAIGAAIIGAYGTSMLCYVTPKEHLGLPNKEDVRVGVVTYKIAAHAADLAKGHPAAQQRDDALSKARFEFRWNDQFNLSLDPERAREYHDETLPAEAAKTAHFCSMCGPKFCSMNISHELQRKIKEEGMKEKANEFVRGGSSLYR</sequence>
<gene>
    <name evidence="1" type="primary">thiC</name>
    <name type="ordered locus">GTNG_0346</name>
</gene>
<feature type="chain" id="PRO_1000004761" description="Phosphomethylpyrimidine synthase">
    <location>
        <begin position="1"/>
        <end position="563"/>
    </location>
</feature>
<feature type="binding site" evidence="1">
    <location>
        <position position="180"/>
    </location>
    <ligand>
        <name>substrate</name>
    </ligand>
</feature>
<feature type="binding site" evidence="1">
    <location>
        <position position="209"/>
    </location>
    <ligand>
        <name>substrate</name>
    </ligand>
</feature>
<feature type="binding site" evidence="1">
    <location>
        <position position="238"/>
    </location>
    <ligand>
        <name>substrate</name>
    </ligand>
</feature>
<feature type="binding site" evidence="1">
    <location>
        <position position="274"/>
    </location>
    <ligand>
        <name>substrate</name>
    </ligand>
</feature>
<feature type="binding site" evidence="1">
    <location>
        <begin position="294"/>
        <end position="296"/>
    </location>
    <ligand>
        <name>substrate</name>
    </ligand>
</feature>
<feature type="binding site" evidence="1">
    <location>
        <begin position="335"/>
        <end position="338"/>
    </location>
    <ligand>
        <name>substrate</name>
    </ligand>
</feature>
<feature type="binding site" evidence="1">
    <location>
        <position position="374"/>
    </location>
    <ligand>
        <name>substrate</name>
    </ligand>
</feature>
<feature type="binding site" evidence="1">
    <location>
        <position position="378"/>
    </location>
    <ligand>
        <name>Zn(2+)</name>
        <dbReference type="ChEBI" id="CHEBI:29105"/>
    </ligand>
</feature>
<feature type="binding site" evidence="1">
    <location>
        <position position="401"/>
    </location>
    <ligand>
        <name>substrate</name>
    </ligand>
</feature>
<feature type="binding site" evidence="1">
    <location>
        <position position="442"/>
    </location>
    <ligand>
        <name>Zn(2+)</name>
        <dbReference type="ChEBI" id="CHEBI:29105"/>
    </ligand>
</feature>
<feature type="binding site" evidence="1">
    <location>
        <position position="522"/>
    </location>
    <ligand>
        <name>[4Fe-4S] cluster</name>
        <dbReference type="ChEBI" id="CHEBI:49883"/>
        <note>4Fe-4S-S-AdoMet</note>
    </ligand>
</feature>
<feature type="binding site" evidence="1">
    <location>
        <position position="525"/>
    </location>
    <ligand>
        <name>[4Fe-4S] cluster</name>
        <dbReference type="ChEBI" id="CHEBI:49883"/>
        <note>4Fe-4S-S-AdoMet</note>
    </ligand>
</feature>
<feature type="binding site" evidence="1">
    <location>
        <position position="530"/>
    </location>
    <ligand>
        <name>[4Fe-4S] cluster</name>
        <dbReference type="ChEBI" id="CHEBI:49883"/>
        <note>4Fe-4S-S-AdoMet</note>
    </ligand>
</feature>
<protein>
    <recommendedName>
        <fullName evidence="1">Phosphomethylpyrimidine synthase</fullName>
        <ecNumber evidence="1">4.1.99.17</ecNumber>
    </recommendedName>
    <alternativeName>
        <fullName evidence="1">Hydroxymethylpyrimidine phosphate synthase</fullName>
        <shortName evidence="1">HMP-P synthase</shortName>
        <shortName evidence="1">HMP-phosphate synthase</shortName>
        <shortName evidence="1">HMPP synthase</shortName>
    </alternativeName>
    <alternativeName>
        <fullName evidence="1">Thiamine biosynthesis protein ThiC</fullName>
    </alternativeName>
</protein>
<dbReference type="EC" id="4.1.99.17" evidence="1"/>
<dbReference type="EMBL" id="CP000557">
    <property type="protein sequence ID" value="ABO65728.1"/>
    <property type="molecule type" value="Genomic_DNA"/>
</dbReference>
<dbReference type="RefSeq" id="WP_008881245.1">
    <property type="nucleotide sequence ID" value="NC_009328.1"/>
</dbReference>
<dbReference type="SMR" id="A4IK74"/>
<dbReference type="GeneID" id="87622045"/>
<dbReference type="KEGG" id="gtn:GTNG_0346"/>
<dbReference type="eggNOG" id="COG0422">
    <property type="taxonomic scope" value="Bacteria"/>
</dbReference>
<dbReference type="HOGENOM" id="CLU_013181_2_1_9"/>
<dbReference type="UniPathway" id="UPA00060"/>
<dbReference type="Proteomes" id="UP000001578">
    <property type="component" value="Chromosome"/>
</dbReference>
<dbReference type="GO" id="GO:0005829">
    <property type="term" value="C:cytosol"/>
    <property type="evidence" value="ECO:0007669"/>
    <property type="project" value="TreeGrafter"/>
</dbReference>
<dbReference type="GO" id="GO:0051539">
    <property type="term" value="F:4 iron, 4 sulfur cluster binding"/>
    <property type="evidence" value="ECO:0007669"/>
    <property type="project" value="UniProtKB-KW"/>
</dbReference>
<dbReference type="GO" id="GO:0016830">
    <property type="term" value="F:carbon-carbon lyase activity"/>
    <property type="evidence" value="ECO:0007669"/>
    <property type="project" value="InterPro"/>
</dbReference>
<dbReference type="GO" id="GO:0008270">
    <property type="term" value="F:zinc ion binding"/>
    <property type="evidence" value="ECO:0007669"/>
    <property type="project" value="UniProtKB-UniRule"/>
</dbReference>
<dbReference type="GO" id="GO:0009228">
    <property type="term" value="P:thiamine biosynthetic process"/>
    <property type="evidence" value="ECO:0007669"/>
    <property type="project" value="UniProtKB-KW"/>
</dbReference>
<dbReference type="GO" id="GO:0009229">
    <property type="term" value="P:thiamine diphosphate biosynthetic process"/>
    <property type="evidence" value="ECO:0007669"/>
    <property type="project" value="UniProtKB-UniRule"/>
</dbReference>
<dbReference type="FunFam" id="3.20.20.540:FF:000001">
    <property type="entry name" value="Phosphomethylpyrimidine synthase"/>
    <property type="match status" value="1"/>
</dbReference>
<dbReference type="Gene3D" id="6.10.250.620">
    <property type="match status" value="1"/>
</dbReference>
<dbReference type="Gene3D" id="3.20.20.540">
    <property type="entry name" value="Radical SAM ThiC family, central domain"/>
    <property type="match status" value="1"/>
</dbReference>
<dbReference type="HAMAP" id="MF_00089">
    <property type="entry name" value="ThiC"/>
    <property type="match status" value="1"/>
</dbReference>
<dbReference type="InterPro" id="IPR037509">
    <property type="entry name" value="ThiC"/>
</dbReference>
<dbReference type="InterPro" id="IPR025747">
    <property type="entry name" value="ThiC-associated_dom"/>
</dbReference>
<dbReference type="InterPro" id="IPR038521">
    <property type="entry name" value="ThiC/Bza_core_dom"/>
</dbReference>
<dbReference type="InterPro" id="IPR002817">
    <property type="entry name" value="ThiC/BzaA/B"/>
</dbReference>
<dbReference type="NCBIfam" id="NF006763">
    <property type="entry name" value="PRK09284.1"/>
    <property type="match status" value="1"/>
</dbReference>
<dbReference type="NCBIfam" id="NF009895">
    <property type="entry name" value="PRK13352.1"/>
    <property type="match status" value="1"/>
</dbReference>
<dbReference type="NCBIfam" id="TIGR00190">
    <property type="entry name" value="thiC"/>
    <property type="match status" value="1"/>
</dbReference>
<dbReference type="PANTHER" id="PTHR30557:SF1">
    <property type="entry name" value="PHOSPHOMETHYLPYRIMIDINE SYNTHASE, CHLOROPLASTIC"/>
    <property type="match status" value="1"/>
</dbReference>
<dbReference type="PANTHER" id="PTHR30557">
    <property type="entry name" value="THIAMINE BIOSYNTHESIS PROTEIN THIC"/>
    <property type="match status" value="1"/>
</dbReference>
<dbReference type="Pfam" id="PF13667">
    <property type="entry name" value="ThiC-associated"/>
    <property type="match status" value="1"/>
</dbReference>
<dbReference type="Pfam" id="PF01964">
    <property type="entry name" value="ThiC_Rad_SAM"/>
    <property type="match status" value="1"/>
</dbReference>
<dbReference type="SFLD" id="SFLDF00407">
    <property type="entry name" value="phosphomethylpyrimidine_syntha"/>
    <property type="match status" value="1"/>
</dbReference>
<dbReference type="SFLD" id="SFLDG01114">
    <property type="entry name" value="phosphomethylpyrimidine_syntha"/>
    <property type="match status" value="1"/>
</dbReference>
<dbReference type="SFLD" id="SFLDS00113">
    <property type="entry name" value="Radical_SAM_Phosphomethylpyrim"/>
    <property type="match status" value="1"/>
</dbReference>
<accession>A4IK74</accession>